<protein>
    <recommendedName>
        <fullName>Ras-related protein Rab-3A</fullName>
        <ecNumber evidence="1">3.6.5.2</ecNumber>
    </recommendedName>
    <alternativeName>
        <fullName>SMG P25A</fullName>
    </alternativeName>
</protein>
<dbReference type="EC" id="3.6.5.2" evidence="1"/>
<dbReference type="EMBL" id="M19885">
    <property type="protein sequence ID" value="AAA30416.1"/>
    <property type="molecule type" value="mRNA"/>
</dbReference>
<dbReference type="EMBL" id="BC118278">
    <property type="protein sequence ID" value="AAI18279.1"/>
    <property type="molecule type" value="mRNA"/>
</dbReference>
<dbReference type="PIR" id="A29224">
    <property type="entry name" value="A29224"/>
</dbReference>
<dbReference type="RefSeq" id="NP_776871.2">
    <property type="nucleotide sequence ID" value="NM_174446.3"/>
</dbReference>
<dbReference type="SMR" id="P11023"/>
<dbReference type="CORUM" id="P11023"/>
<dbReference type="FunCoup" id="P11023">
    <property type="interactions" value="1102"/>
</dbReference>
<dbReference type="STRING" id="9913.ENSBTAP00000002783"/>
<dbReference type="PaxDb" id="9913-ENSBTAP00000014062"/>
<dbReference type="Ensembl" id="ENSBTAT00000036462.4">
    <property type="protein sequence ID" value="ENSBTAP00000036320.4"/>
    <property type="gene ID" value="ENSBTAG00000010635.7"/>
</dbReference>
<dbReference type="GeneID" id="282029"/>
<dbReference type="KEGG" id="bta:282029"/>
<dbReference type="CTD" id="5864"/>
<dbReference type="VEuPathDB" id="HostDB:ENSBTAG00000010635"/>
<dbReference type="VGNC" id="VGNC:33649">
    <property type="gene designation" value="RAB3A"/>
</dbReference>
<dbReference type="eggNOG" id="KOG0093">
    <property type="taxonomic scope" value="Eukaryota"/>
</dbReference>
<dbReference type="GeneTree" id="ENSGT00940000158959"/>
<dbReference type="HOGENOM" id="CLU_041217_10_1_1"/>
<dbReference type="InParanoid" id="P11023"/>
<dbReference type="OrthoDB" id="9989112at2759"/>
<dbReference type="TreeFam" id="TF313199"/>
<dbReference type="Reactome" id="R-BTA-181429">
    <property type="pathway name" value="Serotonin Neurotransmitter Release Cycle"/>
</dbReference>
<dbReference type="Reactome" id="R-BTA-181430">
    <property type="pathway name" value="Norepinephrine Neurotransmitter Release Cycle"/>
</dbReference>
<dbReference type="Reactome" id="R-BTA-210500">
    <property type="pathway name" value="Glutamate Neurotransmitter Release Cycle"/>
</dbReference>
<dbReference type="Reactome" id="R-BTA-212676">
    <property type="pathway name" value="Dopamine Neurotransmitter Release Cycle"/>
</dbReference>
<dbReference type="Reactome" id="R-BTA-264642">
    <property type="pathway name" value="Acetylcholine Neurotransmitter Release Cycle"/>
</dbReference>
<dbReference type="Reactome" id="R-BTA-6798695">
    <property type="pathway name" value="Neutrophil degranulation"/>
</dbReference>
<dbReference type="Reactome" id="R-BTA-8873719">
    <property type="pathway name" value="RAB geranylgeranylation"/>
</dbReference>
<dbReference type="Reactome" id="R-BTA-8876198">
    <property type="pathway name" value="RAB GEFs exchange GTP for GDP on RABs"/>
</dbReference>
<dbReference type="Reactome" id="R-BTA-888590">
    <property type="pathway name" value="GABA synthesis, release, reuptake and degradation"/>
</dbReference>
<dbReference type="Proteomes" id="UP000009136">
    <property type="component" value="Chromosome 7"/>
</dbReference>
<dbReference type="Bgee" id="ENSBTAG00000010635">
    <property type="expression patterns" value="Expressed in Ammon's horn and 102 other cell types or tissues"/>
</dbReference>
<dbReference type="GO" id="GO:0030424">
    <property type="term" value="C:axon"/>
    <property type="evidence" value="ECO:0000318"/>
    <property type="project" value="GO_Central"/>
</dbReference>
<dbReference type="GO" id="GO:0005829">
    <property type="term" value="C:cytosol"/>
    <property type="evidence" value="ECO:0007669"/>
    <property type="project" value="UniProtKB-SubCell"/>
</dbReference>
<dbReference type="GO" id="GO:0005768">
    <property type="term" value="C:endosome"/>
    <property type="evidence" value="ECO:0000318"/>
    <property type="project" value="GO_Central"/>
</dbReference>
<dbReference type="GO" id="GO:0005764">
    <property type="term" value="C:lysosome"/>
    <property type="evidence" value="ECO:0007669"/>
    <property type="project" value="UniProtKB-SubCell"/>
</dbReference>
<dbReference type="GO" id="GO:0016020">
    <property type="term" value="C:membrane"/>
    <property type="evidence" value="ECO:0000314"/>
    <property type="project" value="UniProtKB"/>
</dbReference>
<dbReference type="GO" id="GO:0005886">
    <property type="term" value="C:plasma membrane"/>
    <property type="evidence" value="ECO:0000318"/>
    <property type="project" value="GO_Central"/>
</dbReference>
<dbReference type="GO" id="GO:0098794">
    <property type="term" value="C:postsynapse"/>
    <property type="evidence" value="ECO:0000250"/>
    <property type="project" value="UniProtKB"/>
</dbReference>
<dbReference type="GO" id="GO:0098793">
    <property type="term" value="C:presynapse"/>
    <property type="evidence" value="ECO:0000250"/>
    <property type="project" value="UniProtKB"/>
</dbReference>
<dbReference type="GO" id="GO:0048786">
    <property type="term" value="C:presynaptic active zone"/>
    <property type="evidence" value="ECO:0000250"/>
    <property type="project" value="UniProtKB"/>
</dbReference>
<dbReference type="GO" id="GO:0008021">
    <property type="term" value="C:synaptic vesicle"/>
    <property type="evidence" value="ECO:0000250"/>
    <property type="project" value="AgBase"/>
</dbReference>
<dbReference type="GO" id="GO:0030672">
    <property type="term" value="C:synaptic vesicle membrane"/>
    <property type="evidence" value="ECO:0000318"/>
    <property type="project" value="GO_Central"/>
</dbReference>
<dbReference type="GO" id="GO:0005525">
    <property type="term" value="F:GTP binding"/>
    <property type="evidence" value="ECO:0007669"/>
    <property type="project" value="UniProtKB-KW"/>
</dbReference>
<dbReference type="GO" id="GO:0003924">
    <property type="term" value="F:GTPase activity"/>
    <property type="evidence" value="ECO:0000250"/>
    <property type="project" value="AgBase"/>
</dbReference>
<dbReference type="GO" id="GO:0031489">
    <property type="term" value="F:myosin V binding"/>
    <property type="evidence" value="ECO:0000318"/>
    <property type="project" value="GO_Central"/>
</dbReference>
<dbReference type="GO" id="GO:0060478">
    <property type="term" value="P:acrosomal vesicle exocytosis"/>
    <property type="evidence" value="ECO:0000318"/>
    <property type="project" value="GO_Central"/>
</dbReference>
<dbReference type="GO" id="GO:0007409">
    <property type="term" value="P:axonogenesis"/>
    <property type="evidence" value="ECO:0000250"/>
    <property type="project" value="AgBase"/>
</dbReference>
<dbReference type="GO" id="GO:0030324">
    <property type="term" value="P:lung development"/>
    <property type="evidence" value="ECO:0000250"/>
    <property type="project" value="AgBase"/>
</dbReference>
<dbReference type="GO" id="GO:0048790">
    <property type="term" value="P:maintenance of presynaptic active zone structure"/>
    <property type="evidence" value="ECO:0000250"/>
    <property type="project" value="AgBase"/>
</dbReference>
<dbReference type="GO" id="GO:0007005">
    <property type="term" value="P:mitochondrion organization"/>
    <property type="evidence" value="ECO:0000250"/>
    <property type="project" value="AgBase"/>
</dbReference>
<dbReference type="GO" id="GO:0007274">
    <property type="term" value="P:neuromuscular synaptic transmission"/>
    <property type="evidence" value="ECO:0000250"/>
    <property type="project" value="AgBase"/>
</dbReference>
<dbReference type="GO" id="GO:0009791">
    <property type="term" value="P:post-embryonic development"/>
    <property type="evidence" value="ECO:0000250"/>
    <property type="project" value="AgBase"/>
</dbReference>
<dbReference type="GO" id="GO:0015031">
    <property type="term" value="P:protein transport"/>
    <property type="evidence" value="ECO:0007669"/>
    <property type="project" value="UniProtKB-KW"/>
</dbReference>
<dbReference type="GO" id="GO:0017157">
    <property type="term" value="P:regulation of exocytosis"/>
    <property type="evidence" value="ECO:0000250"/>
    <property type="project" value="AgBase"/>
</dbReference>
<dbReference type="GO" id="GO:0031630">
    <property type="term" value="P:regulation of synaptic vesicle fusion to presynaptic active zone membrane"/>
    <property type="evidence" value="ECO:0000250"/>
    <property type="project" value="AgBase"/>
</dbReference>
<dbReference type="GO" id="GO:0003016">
    <property type="term" value="P:respiratory system process"/>
    <property type="evidence" value="ECO:0000250"/>
    <property type="project" value="AgBase"/>
</dbReference>
<dbReference type="GO" id="GO:0051602">
    <property type="term" value="P:response to electrical stimulus"/>
    <property type="evidence" value="ECO:0000250"/>
    <property type="project" value="AgBase"/>
</dbReference>
<dbReference type="GO" id="GO:0050975">
    <property type="term" value="P:sensory perception of touch"/>
    <property type="evidence" value="ECO:0000250"/>
    <property type="project" value="AgBase"/>
</dbReference>
<dbReference type="GO" id="GO:0016079">
    <property type="term" value="P:synaptic vesicle exocytosis"/>
    <property type="evidence" value="ECO:0000250"/>
    <property type="project" value="AgBase"/>
</dbReference>
<dbReference type="GO" id="GO:0016188">
    <property type="term" value="P:synaptic vesicle maturation"/>
    <property type="evidence" value="ECO:0000250"/>
    <property type="project" value="AgBase"/>
</dbReference>
<dbReference type="CDD" id="cd01865">
    <property type="entry name" value="Rab3"/>
    <property type="match status" value="1"/>
</dbReference>
<dbReference type="FunFam" id="3.40.50.300:FF:000206">
    <property type="entry name" value="Ras-related protein Rab-3C"/>
    <property type="match status" value="1"/>
</dbReference>
<dbReference type="Gene3D" id="3.40.50.300">
    <property type="entry name" value="P-loop containing nucleotide triphosphate hydrolases"/>
    <property type="match status" value="1"/>
</dbReference>
<dbReference type="InterPro" id="IPR027417">
    <property type="entry name" value="P-loop_NTPase"/>
</dbReference>
<dbReference type="InterPro" id="IPR037872">
    <property type="entry name" value="Rab3"/>
</dbReference>
<dbReference type="InterPro" id="IPR005225">
    <property type="entry name" value="Small_GTP-bd"/>
</dbReference>
<dbReference type="InterPro" id="IPR001806">
    <property type="entry name" value="Small_GTPase"/>
</dbReference>
<dbReference type="InterPro" id="IPR050305">
    <property type="entry name" value="Small_GTPase_Rab"/>
</dbReference>
<dbReference type="NCBIfam" id="TIGR00231">
    <property type="entry name" value="small_GTP"/>
    <property type="match status" value="1"/>
</dbReference>
<dbReference type="PANTHER" id="PTHR47980">
    <property type="entry name" value="LD44762P"/>
    <property type="match status" value="1"/>
</dbReference>
<dbReference type="Pfam" id="PF00071">
    <property type="entry name" value="Ras"/>
    <property type="match status" value="1"/>
</dbReference>
<dbReference type="PRINTS" id="PR00449">
    <property type="entry name" value="RASTRNSFRMNG"/>
</dbReference>
<dbReference type="SMART" id="SM00175">
    <property type="entry name" value="RAB"/>
    <property type="match status" value="1"/>
</dbReference>
<dbReference type="SMART" id="SM00176">
    <property type="entry name" value="RAN"/>
    <property type="match status" value="1"/>
</dbReference>
<dbReference type="SMART" id="SM00173">
    <property type="entry name" value="RAS"/>
    <property type="match status" value="1"/>
</dbReference>
<dbReference type="SMART" id="SM00174">
    <property type="entry name" value="RHO"/>
    <property type="match status" value="1"/>
</dbReference>
<dbReference type="SUPFAM" id="SSF52540">
    <property type="entry name" value="P-loop containing nucleoside triphosphate hydrolases"/>
    <property type="match status" value="1"/>
</dbReference>
<dbReference type="PROSITE" id="PS51419">
    <property type="entry name" value="RAB"/>
    <property type="match status" value="1"/>
</dbReference>
<feature type="chain" id="PRO_0000121075" description="Ras-related protein Rab-3A">
    <location>
        <begin position="1"/>
        <end position="220"/>
    </location>
</feature>
<feature type="region of interest" description="Disordered" evidence="4">
    <location>
        <begin position="194"/>
        <end position="220"/>
    </location>
</feature>
<feature type="short sequence motif" description="Switch 1" evidence="3">
    <location>
        <begin position="49"/>
        <end position="58"/>
    </location>
</feature>
<feature type="short sequence motif" description="Switch 2" evidence="3">
    <location>
        <begin position="80"/>
        <end position="96"/>
    </location>
</feature>
<feature type="binding site" evidence="3">
    <location>
        <position position="31"/>
    </location>
    <ligand>
        <name>GTP</name>
        <dbReference type="ChEBI" id="CHEBI:37565"/>
    </ligand>
</feature>
<feature type="binding site" evidence="3">
    <location>
        <position position="32"/>
    </location>
    <ligand>
        <name>GTP</name>
        <dbReference type="ChEBI" id="CHEBI:37565"/>
    </ligand>
</feature>
<feature type="binding site" evidence="3">
    <location>
        <position position="33"/>
    </location>
    <ligand>
        <name>GTP</name>
        <dbReference type="ChEBI" id="CHEBI:37565"/>
    </ligand>
</feature>
<feature type="binding site" evidence="3">
    <location>
        <position position="34"/>
    </location>
    <ligand>
        <name>GTP</name>
        <dbReference type="ChEBI" id="CHEBI:37565"/>
    </ligand>
</feature>
<feature type="binding site" evidence="3">
    <location>
        <position position="35"/>
    </location>
    <ligand>
        <name>GTP</name>
        <dbReference type="ChEBI" id="CHEBI:37565"/>
    </ligand>
</feature>
<feature type="binding site" evidence="3">
    <location>
        <position position="36"/>
    </location>
    <ligand>
        <name>GTP</name>
        <dbReference type="ChEBI" id="CHEBI:37565"/>
    </ligand>
</feature>
<feature type="binding site" evidence="3">
    <location>
        <position position="36"/>
    </location>
    <ligand>
        <name>Mg(2+)</name>
        <dbReference type="ChEBI" id="CHEBI:18420"/>
    </ligand>
</feature>
<feature type="binding site" evidence="3">
    <location>
        <position position="37"/>
    </location>
    <ligand>
        <name>GTP</name>
        <dbReference type="ChEBI" id="CHEBI:37565"/>
    </ligand>
</feature>
<feature type="binding site" evidence="3">
    <location>
        <position position="48"/>
    </location>
    <ligand>
        <name>GTP</name>
        <dbReference type="ChEBI" id="CHEBI:37565"/>
    </ligand>
</feature>
<feature type="binding site" evidence="3">
    <location>
        <position position="49"/>
    </location>
    <ligand>
        <name>GTP</name>
        <dbReference type="ChEBI" id="CHEBI:37565"/>
    </ligand>
</feature>
<feature type="binding site" evidence="3">
    <location>
        <position position="53"/>
    </location>
    <ligand>
        <name>GTP</name>
        <dbReference type="ChEBI" id="CHEBI:37565"/>
    </ligand>
</feature>
<feature type="binding site" evidence="3">
    <location>
        <position position="54"/>
    </location>
    <ligand>
        <name>GTP</name>
        <dbReference type="ChEBI" id="CHEBI:37565"/>
    </ligand>
</feature>
<feature type="binding site" evidence="3">
    <location>
        <position position="54"/>
    </location>
    <ligand>
        <name>Mg(2+)</name>
        <dbReference type="ChEBI" id="CHEBI:18420"/>
    </ligand>
</feature>
<feature type="binding site" evidence="3">
    <location>
        <position position="77"/>
    </location>
    <ligand>
        <name>Mg(2+)</name>
        <dbReference type="ChEBI" id="CHEBI:18420"/>
    </ligand>
</feature>
<feature type="binding site" evidence="3">
    <location>
        <position position="80"/>
    </location>
    <ligand>
        <name>GTP</name>
        <dbReference type="ChEBI" id="CHEBI:37565"/>
    </ligand>
</feature>
<feature type="binding site" evidence="3">
    <location>
        <position position="135"/>
    </location>
    <ligand>
        <name>GTP</name>
        <dbReference type="ChEBI" id="CHEBI:37565"/>
    </ligand>
</feature>
<feature type="binding site" evidence="3">
    <location>
        <position position="136"/>
    </location>
    <ligand>
        <name>GTP</name>
        <dbReference type="ChEBI" id="CHEBI:37565"/>
    </ligand>
</feature>
<feature type="binding site" evidence="3">
    <location>
        <position position="138"/>
    </location>
    <ligand>
        <name>GTP</name>
        <dbReference type="ChEBI" id="CHEBI:37565"/>
    </ligand>
</feature>
<feature type="binding site" evidence="3">
    <location>
        <position position="166"/>
    </location>
    <ligand>
        <name>GTP</name>
        <dbReference type="ChEBI" id="CHEBI:37565"/>
    </ligand>
</feature>
<feature type="binding site" evidence="3">
    <location>
        <position position="167"/>
    </location>
    <ligand>
        <name>GTP</name>
        <dbReference type="ChEBI" id="CHEBI:37565"/>
    </ligand>
</feature>
<feature type="modified residue" description="Phosphothreonine" evidence="1">
    <location>
        <position position="86"/>
    </location>
</feature>
<feature type="modified residue" description="Phosphoserine" evidence="2">
    <location>
        <position position="188"/>
    </location>
</feature>
<feature type="modified residue" description="Phosphoserine" evidence="2">
    <location>
        <position position="190"/>
    </location>
</feature>
<feature type="modified residue" description="Cysteine methyl ester" evidence="1">
    <location>
        <position position="220"/>
    </location>
</feature>
<feature type="lipid moiety-binding region" description="S-geranylgeranyl cysteine" evidence="5">
    <location>
        <position position="218"/>
    </location>
</feature>
<feature type="lipid moiety-binding region" description="S-geranylgeranyl cysteine" evidence="5">
    <location>
        <position position="220"/>
    </location>
</feature>
<feature type="sequence conflict" description="In Ref. 1; AAA30416." evidence="6" ref="1">
    <original>W</original>
    <variation>S</variation>
    <location>
        <position position="125"/>
    </location>
</feature>
<name>RAB3A_BOVIN</name>
<reference key="1">
    <citation type="journal article" date="1988" name="J. Biol. Chem.">
        <title>Nucleotide and deduced amino acid sequences of a GTP-binding protein family with molecular weights of 25,000 from bovine brain.</title>
        <authorList>
            <person name="Matsui Y."/>
            <person name="Kikuchi A."/>
            <person name="Kondo J."/>
            <person name="Hishida T."/>
            <person name="Teranishi Y."/>
            <person name="Takai Y."/>
        </authorList>
    </citation>
    <scope>NUCLEOTIDE SEQUENCE [MRNA]</scope>
    <scope>PARTIAL PROTEIN SEQUENCE</scope>
</reference>
<reference key="2">
    <citation type="submission" date="2006-06" db="EMBL/GenBank/DDBJ databases">
        <authorList>
            <consortium name="NIH - Mammalian Gene Collection (MGC) project"/>
        </authorList>
    </citation>
    <scope>NUCLEOTIDE SEQUENCE [LARGE SCALE MRNA]</scope>
    <source>
        <strain>Hereford</strain>
        <tissue>Brain cortex</tissue>
    </source>
</reference>
<reference key="3">
    <citation type="journal article" date="1991" name="Proc. Natl. Acad. Sci. U.S.A.">
        <title>C-terminus of the small GTP-binding protein smg p25A contains two geranylgeranylated cysteine residues and a methyl ester.</title>
        <authorList>
            <person name="Farnsworth C.C."/>
            <person name="Kawata M."/>
            <person name="Yoshida Y."/>
            <person name="Takai Y."/>
            <person name="Gelb M.H."/>
            <person name="Glomset J.A."/>
        </authorList>
    </citation>
    <scope>ISOPRENYLATION AT CYS-218 AND CYS-220</scope>
</reference>
<organism>
    <name type="scientific">Bos taurus</name>
    <name type="common">Bovine</name>
    <dbReference type="NCBI Taxonomy" id="9913"/>
    <lineage>
        <taxon>Eukaryota</taxon>
        <taxon>Metazoa</taxon>
        <taxon>Chordata</taxon>
        <taxon>Craniata</taxon>
        <taxon>Vertebrata</taxon>
        <taxon>Euteleostomi</taxon>
        <taxon>Mammalia</taxon>
        <taxon>Eutheria</taxon>
        <taxon>Laurasiatheria</taxon>
        <taxon>Artiodactyla</taxon>
        <taxon>Ruminantia</taxon>
        <taxon>Pecora</taxon>
        <taxon>Bovidae</taxon>
        <taxon>Bovinae</taxon>
        <taxon>Bos</taxon>
    </lineage>
</organism>
<accession>P11023</accession>
<accession>Q17QM2</accession>
<proteinExistence type="evidence at protein level"/>
<keyword id="KW-1003">Cell membrane</keyword>
<keyword id="KW-0966">Cell projection</keyword>
<keyword id="KW-0963">Cytoplasm</keyword>
<keyword id="KW-0968">Cytoplasmic vesicle</keyword>
<keyword id="KW-0903">Direct protein sequencing</keyword>
<keyword id="KW-0268">Exocytosis</keyword>
<keyword id="KW-0342">GTP-binding</keyword>
<keyword id="KW-0378">Hydrolase</keyword>
<keyword id="KW-0449">Lipoprotein</keyword>
<keyword id="KW-0458">Lysosome</keyword>
<keyword id="KW-0460">Magnesium</keyword>
<keyword id="KW-0472">Membrane</keyword>
<keyword id="KW-0479">Metal-binding</keyword>
<keyword id="KW-0488">Methylation</keyword>
<keyword id="KW-0547">Nucleotide-binding</keyword>
<keyword id="KW-0597">Phosphoprotein</keyword>
<keyword id="KW-0636">Prenylation</keyword>
<keyword id="KW-0653">Protein transport</keyword>
<keyword id="KW-1185">Reference proteome</keyword>
<keyword id="KW-0770">Synapse</keyword>
<keyword id="KW-0813">Transport</keyword>
<evidence type="ECO:0000250" key="1">
    <source>
        <dbReference type="UniProtKB" id="P20336"/>
    </source>
</evidence>
<evidence type="ECO:0000250" key="2">
    <source>
        <dbReference type="UniProtKB" id="P63011"/>
    </source>
</evidence>
<evidence type="ECO:0000250" key="3">
    <source>
        <dbReference type="UniProtKB" id="P63012"/>
    </source>
</evidence>
<evidence type="ECO:0000256" key="4">
    <source>
        <dbReference type="SAM" id="MobiDB-lite"/>
    </source>
</evidence>
<evidence type="ECO:0000269" key="5">
    <source>
    </source>
</evidence>
<evidence type="ECO:0000305" key="6"/>
<comment type="function">
    <text evidence="1 2 3">The small GTPases Rab are key regulators of intracellular membrane trafficking, from the formation of transport vesicles to their fusion with membranes (By similarity). Rabs cycle between an inactive GDP-bound form and an active GTP-bound form that is able to recruit to membranes different sets of downstream effectors directly responsible for vesicle formation, movement, tethering and fusion (By similarity). RAB3A plays a central role in regulated exocytosis and secretion. Controls the recruitment, tethering and docking of secretory vesicles to the plasma membrane (By similarity). Upon stimulation, switches to its active GTP-bound form, cycles to vesicles and recruits effectors such as RIMS1, RIMS2, Rabphilin-3A/RPH3A, RPH3AL or SYTL4 to help the docking of vesicules onto the plasma membrane (By similarity). Upon GTP hydrolysis by GTPase-activating protein, dissociates from the vesicle membrane allowing the exocytosis to proceed (By similarity). Stimulates insulin secretion through interaction with RIMS2 or RPH3AL effectors in pancreatic beta cells (By similarity). Regulates calcium-dependent lysosome exocytosis and plasma membrane repair (PMR) via the interaction with 2 effectors, SYTL4 and myosin-9/MYH9 (By similarity). Acts as a positive regulator of acrosome content secretion in sperm cells by interacting with RIMS1 (By similarity). Also plays a role in the regulation of dopamine release by interacting with synaptotagmin I/SYT (By similarity).</text>
</comment>
<comment type="catalytic activity">
    <reaction evidence="1">
        <text>GTP + H2O = GDP + phosphate + H(+)</text>
        <dbReference type="Rhea" id="RHEA:19669"/>
        <dbReference type="ChEBI" id="CHEBI:15377"/>
        <dbReference type="ChEBI" id="CHEBI:15378"/>
        <dbReference type="ChEBI" id="CHEBI:37565"/>
        <dbReference type="ChEBI" id="CHEBI:43474"/>
        <dbReference type="ChEBI" id="CHEBI:58189"/>
        <dbReference type="EC" id="3.6.5.2"/>
    </reaction>
    <physiologicalReaction direction="left-to-right" evidence="1">
        <dbReference type="Rhea" id="RHEA:19670"/>
    </physiologicalReaction>
</comment>
<comment type="cofactor">
    <cofactor evidence="3">
        <name>Mg(2+)</name>
        <dbReference type="ChEBI" id="CHEBI:18420"/>
    </cofactor>
</comment>
<comment type="activity regulation">
    <text evidence="1">Regulated by guanine nucleotide exchange factors (GEFs) including RAB3IL1 and MADD which promote the exchange of bound GDP for free GTP. Regulated by GTPase activating proteins (GAPs) including RAB3GAP1 and TBC1D10B which increase the GTP hydrolysis activity. Inhibited by GDP dissociation inhibitors (GDIs) which prevent Rab-GDP dissociation.</text>
</comment>
<comment type="subunit">
    <text evidence="1 2 3">Interacts with RIMS1 and RIMS2 (By similarity). Interacts with Rabphilin-3A/RPH3A and Rab effector Noc2/RPH3AL (By similarity). Interacts with SYTL4 (By similarity). Interacts with RAB3IP (By similarity). Interacts with SGSM1 and SGSM3 (By similarity). Interacts with SYT1 (By similarity). Interacts with MYH9; this interaction is essential for lysosome exocytosis and plasma membrane repair (By similarity). Interacts with STXBP1; this interaction promotes RAB3A dissociation from the vesicle membrane (By similarity). Interacts with SNCA (By similarity). Interacts with GDI1, GDI2, CHM and CHML; phosphorylation at Thr-86 disrupts these interactions (By similarity). Interacts with MADD (via uDENN domain); the GTP-bound form is preferred for interaction (By similarity).</text>
</comment>
<comment type="subcellular location">
    <subcellularLocation>
        <location evidence="3">Cytoplasm</location>
        <location evidence="3">Cytosol</location>
    </subcellularLocation>
    <subcellularLocation>
        <location evidence="1">Lysosome</location>
    </subcellularLocation>
    <subcellularLocation>
        <location evidence="3">Cytoplasmic vesicle</location>
        <location evidence="3">Secretory vesicle</location>
    </subcellularLocation>
    <subcellularLocation>
        <location evidence="2">Cell projection</location>
        <location evidence="2">Axon</location>
    </subcellularLocation>
    <subcellularLocation>
        <location evidence="6">Cell membrane</location>
        <topology evidence="6">Lipid-anchor</topology>
        <orientation evidence="6">Cytoplasmic side</orientation>
    </subcellularLocation>
    <subcellularLocation>
        <location evidence="2">Presynapse</location>
    </subcellularLocation>
    <subcellularLocation>
        <location evidence="2">Postsynapse</location>
    </subcellularLocation>
    <text evidence="3">Cycles between a vesicle-associated GTP-bound form and a cytosolic GDP-bound form.</text>
</comment>
<comment type="tissue specificity">
    <text>Specifically expressed in brain.</text>
</comment>
<comment type="domain">
    <text evidence="3">Switch 1, switch 2 and the interswitch regions are characteristic of Rab GTPases and mediate the interactions with Rab downstream effectors. The switch regions undergo conformational changes upon nucleotide binding which drives interaction with specific sets of effector proteins, with most effectors only binding to GTP-bound Rab.</text>
</comment>
<comment type="PTM">
    <text evidence="1">Phosphorylation of Thr-86 in the switch II region by LRRK2 prevents the association of RAB regulatory proteins, including CHM, CHML and RAB GDP dissociation inhibitors GDI1 and GDI2.</text>
</comment>
<comment type="similarity">
    <text evidence="6">Belongs to the small GTPase superfamily. Rab family.</text>
</comment>
<gene>
    <name type="primary">RAB3A</name>
</gene>
<sequence length="220" mass="24954">MASATDARYGQKESSDQNFDYMFKILIIGNSSVGKTSFLFRYADDSFTPAFVSTVGIDFKVKTIYRNDKRIKLQIWDTAGQERYRTITTAYYRGAMGFILMYDITNEESFNAVQDWSTQIKTYSWDNAQVLLVGNKCDMEDERVVSSERGRQLADHLGFEFFEASAKDNINVKQTFERLVDVICEKMSESLDTADPAVTGAKQGPQLTDQQAPPHQDCAC</sequence>